<comment type="subunit">
    <text evidence="4">Interacts with EEF2KMT.</text>
</comment>
<comment type="similarity">
    <text evidence="5">Belongs to the class I-like SAM-binding methyltransferase superfamily. EEF2KMT family.</text>
</comment>
<proteinExistence type="evidence at protein level"/>
<accession>P0C5J1</accession>
<keyword id="KW-0007">Acetylation</keyword>
<keyword id="KW-0489">Methyltransferase</keyword>
<keyword id="KW-1185">Reference proteome</keyword>
<keyword id="KW-0949">S-adenosyl-L-methionine</keyword>
<keyword id="KW-0808">Transferase</keyword>
<gene>
    <name type="primary">FAM86B2</name>
</gene>
<evidence type="ECO:0000250" key="1">
    <source>
        <dbReference type="UniProtKB" id="P47163"/>
    </source>
</evidence>
<evidence type="ECO:0000250" key="2">
    <source>
        <dbReference type="UniProtKB" id="Q96G04"/>
    </source>
</evidence>
<evidence type="ECO:0000250" key="3">
    <source>
        <dbReference type="UniProtKB" id="Q9H867"/>
    </source>
</evidence>
<evidence type="ECO:0000269" key="4">
    <source>
    </source>
</evidence>
<evidence type="ECO:0000305" key="5"/>
<protein>
    <recommendedName>
        <fullName evidence="5">Putative protein N-methyltransferase FAM86B2</fullName>
        <ecNumber evidence="1">2.1.1.-</ecNumber>
    </recommendedName>
</protein>
<sequence>MAPEENAGTELLLQGFERRFLAVRTLRSFPWQSLEAKLRDSSDSELLRDILQKTVRHPVCVKHPPSVKYAWCFLSELIKKHEAVHTEPLDKLYEVLAETLMAKESTQGHRSYLLSSGGSVTLSKSTAIISHGTTGLVTWDAALYLAEWAIENPAAFINRTVLELGSGAGLTGLAICKMCRPRAYIFSDPHSRILEQLRGNVLLNGLSLEADITGNLDSPRVTVAQLDWDVAMVHQLSAFQPDVVIAADVLYCPEAIVSLVGVLQRLAACREHKRAPEVYVAFTVRNPETCQLFTTELGRDGIRWEAEAHHDQKLFPYGEHLEMAMLNLTL</sequence>
<reference key="1">
    <citation type="journal article" date="2006" name="Nature">
        <title>DNA sequence and analysis of human chromosome 8.</title>
        <authorList>
            <person name="Nusbaum C."/>
            <person name="Mikkelsen T.S."/>
            <person name="Zody M.C."/>
            <person name="Asakawa S."/>
            <person name="Taudien S."/>
            <person name="Garber M."/>
            <person name="Kodira C.D."/>
            <person name="Schueler M.G."/>
            <person name="Shimizu A."/>
            <person name="Whittaker C.A."/>
            <person name="Chang J.L."/>
            <person name="Cuomo C.A."/>
            <person name="Dewar K."/>
            <person name="FitzGerald M.G."/>
            <person name="Yang X."/>
            <person name="Allen N.R."/>
            <person name="Anderson S."/>
            <person name="Asakawa T."/>
            <person name="Blechschmidt K."/>
            <person name="Bloom T."/>
            <person name="Borowsky M.L."/>
            <person name="Butler J."/>
            <person name="Cook A."/>
            <person name="Corum B."/>
            <person name="DeArellano K."/>
            <person name="DeCaprio D."/>
            <person name="Dooley K.T."/>
            <person name="Dorris L. III"/>
            <person name="Engels R."/>
            <person name="Gloeckner G."/>
            <person name="Hafez N."/>
            <person name="Hagopian D.S."/>
            <person name="Hall J.L."/>
            <person name="Ishikawa S.K."/>
            <person name="Jaffe D.B."/>
            <person name="Kamat A."/>
            <person name="Kudoh J."/>
            <person name="Lehmann R."/>
            <person name="Lokitsang T."/>
            <person name="Macdonald P."/>
            <person name="Major J.E."/>
            <person name="Matthews C.D."/>
            <person name="Mauceli E."/>
            <person name="Menzel U."/>
            <person name="Mihalev A.H."/>
            <person name="Minoshima S."/>
            <person name="Murayama Y."/>
            <person name="Naylor J.W."/>
            <person name="Nicol R."/>
            <person name="Nguyen C."/>
            <person name="O'Leary S.B."/>
            <person name="O'Neill K."/>
            <person name="Parker S.C.J."/>
            <person name="Polley A."/>
            <person name="Raymond C.K."/>
            <person name="Reichwald K."/>
            <person name="Rodriguez J."/>
            <person name="Sasaki T."/>
            <person name="Schilhabel M."/>
            <person name="Siddiqui R."/>
            <person name="Smith C.L."/>
            <person name="Sneddon T.P."/>
            <person name="Talamas J.A."/>
            <person name="Tenzin P."/>
            <person name="Topham K."/>
            <person name="Venkataraman V."/>
            <person name="Wen G."/>
            <person name="Yamazaki S."/>
            <person name="Young S.K."/>
            <person name="Zeng Q."/>
            <person name="Zimmer A.R."/>
            <person name="Rosenthal A."/>
            <person name="Birren B.W."/>
            <person name="Platzer M."/>
            <person name="Shimizu N."/>
            <person name="Lander E.S."/>
        </authorList>
    </citation>
    <scope>NUCLEOTIDE SEQUENCE [LARGE SCALE GENOMIC DNA]</scope>
</reference>
<reference key="2">
    <citation type="journal article" date="2013" name="PLoS Genet.">
        <title>A newly uncovered group of distantly related lysine methyltransferases preferentially interact with molecular chaperones to regulate their activity.</title>
        <authorList>
            <person name="Cloutier P."/>
            <person name="Lavallee-Adam M."/>
            <person name="Faubert D."/>
            <person name="Blanchette M."/>
            <person name="Coulombe B."/>
        </authorList>
    </citation>
    <scope>INTERACTION WITH EEF2KMT</scope>
</reference>
<name>F86B2_HUMAN</name>
<organism>
    <name type="scientific">Homo sapiens</name>
    <name type="common">Human</name>
    <dbReference type="NCBI Taxonomy" id="9606"/>
    <lineage>
        <taxon>Eukaryota</taxon>
        <taxon>Metazoa</taxon>
        <taxon>Chordata</taxon>
        <taxon>Craniata</taxon>
        <taxon>Vertebrata</taxon>
        <taxon>Euteleostomi</taxon>
        <taxon>Mammalia</taxon>
        <taxon>Eutheria</taxon>
        <taxon>Euarchontoglires</taxon>
        <taxon>Primates</taxon>
        <taxon>Haplorrhini</taxon>
        <taxon>Catarrhini</taxon>
        <taxon>Hominidae</taxon>
        <taxon>Homo</taxon>
    </lineage>
</organism>
<dbReference type="EC" id="2.1.1.-" evidence="1"/>
<dbReference type="EMBL" id="AC087203">
    <property type="status" value="NOT_ANNOTATED_CDS"/>
    <property type="molecule type" value="Genomic_DNA"/>
</dbReference>
<dbReference type="CCDS" id="CCDS59092.1"/>
<dbReference type="RefSeq" id="NP_001131082.1">
    <property type="nucleotide sequence ID" value="NM_001137610.3"/>
</dbReference>
<dbReference type="SMR" id="P0C5J1"/>
<dbReference type="BioGRID" id="575703">
    <property type="interactions" value="17"/>
</dbReference>
<dbReference type="FunCoup" id="P0C5J1">
    <property type="interactions" value="14"/>
</dbReference>
<dbReference type="STRING" id="9606.ENSP00000262365"/>
<dbReference type="GlyGen" id="P0C5J1">
    <property type="glycosylation" value="1 site, 1 O-linked glycan (1 site)"/>
</dbReference>
<dbReference type="iPTMnet" id="P0C5J1"/>
<dbReference type="PhosphoSitePlus" id="P0C5J1"/>
<dbReference type="BioMuta" id="FAM86B2"/>
<dbReference type="DMDM" id="160010887"/>
<dbReference type="jPOST" id="P0C5J1"/>
<dbReference type="MassIVE" id="P0C5J1"/>
<dbReference type="PaxDb" id="9606-ENSP00000262365"/>
<dbReference type="PeptideAtlas" id="P0C5J1"/>
<dbReference type="ProteomicsDB" id="52308"/>
<dbReference type="Pumba" id="P0C5J1"/>
<dbReference type="TopDownProteomics" id="P0C5J1"/>
<dbReference type="DNASU" id="653333"/>
<dbReference type="Ensembl" id="ENST00000262365.9">
    <property type="protein sequence ID" value="ENSP00000262365.4"/>
    <property type="gene ID" value="ENSG00000145002.13"/>
</dbReference>
<dbReference type="GeneID" id="653333"/>
<dbReference type="KEGG" id="hsa:653333"/>
<dbReference type="MANE-Select" id="ENST00000262365.9">
    <property type="protein sequence ID" value="ENSP00000262365.4"/>
    <property type="RefSeq nucleotide sequence ID" value="NM_001137610.3"/>
    <property type="RefSeq protein sequence ID" value="NP_001131082.1"/>
</dbReference>
<dbReference type="UCSC" id="uc003wvt.5">
    <property type="organism name" value="human"/>
</dbReference>
<dbReference type="AGR" id="HGNC:32222"/>
<dbReference type="CTD" id="653333"/>
<dbReference type="GeneCards" id="FAM86B2"/>
<dbReference type="HGNC" id="HGNC:32222">
    <property type="gene designation" value="FAM86B2"/>
</dbReference>
<dbReference type="HPA" id="ENSG00000145002">
    <property type="expression patterns" value="Not detected"/>
</dbReference>
<dbReference type="MIM" id="616123">
    <property type="type" value="gene"/>
</dbReference>
<dbReference type="neXtProt" id="NX_P0C5J1"/>
<dbReference type="PharmGKB" id="PA142671860"/>
<dbReference type="VEuPathDB" id="HostDB:ENSG00000145002"/>
<dbReference type="eggNOG" id="KOG2497">
    <property type="taxonomic scope" value="Eukaryota"/>
</dbReference>
<dbReference type="GeneTree" id="ENSGT00510000047003"/>
<dbReference type="HOGENOM" id="CLU_038942_0_0_1"/>
<dbReference type="InParanoid" id="P0C5J1"/>
<dbReference type="OMA" id="RHESAHA"/>
<dbReference type="OrthoDB" id="194386at2759"/>
<dbReference type="PAN-GO" id="P0C5J1">
    <property type="GO annotations" value="0 GO annotations based on evolutionary models"/>
</dbReference>
<dbReference type="PhylomeDB" id="P0C5J1"/>
<dbReference type="TreeFam" id="TF326304"/>
<dbReference type="PathwayCommons" id="P0C5J1"/>
<dbReference type="SignaLink" id="P0C5J1"/>
<dbReference type="BioGRID-ORCS" id="653333">
    <property type="hits" value="48 hits in 1036 CRISPR screens"/>
</dbReference>
<dbReference type="GenomeRNAi" id="653333"/>
<dbReference type="Pharos" id="P0C5J1">
    <property type="development level" value="Tdark"/>
</dbReference>
<dbReference type="PRO" id="PR:P0C5J1"/>
<dbReference type="Proteomes" id="UP000005640">
    <property type="component" value="Chromosome 8"/>
</dbReference>
<dbReference type="RNAct" id="P0C5J1">
    <property type="molecule type" value="protein"/>
</dbReference>
<dbReference type="Bgee" id="ENSG00000145002">
    <property type="expression patterns" value="Expressed in right uterine tube and 93 other cell types or tissues"/>
</dbReference>
<dbReference type="ExpressionAtlas" id="P0C5J1">
    <property type="expression patterns" value="baseline and differential"/>
</dbReference>
<dbReference type="GO" id="GO:0032991">
    <property type="term" value="C:protein-containing complex"/>
    <property type="evidence" value="ECO:0000314"/>
    <property type="project" value="UniProtKB"/>
</dbReference>
<dbReference type="GO" id="GO:0016279">
    <property type="term" value="F:protein-lysine N-methyltransferase activity"/>
    <property type="evidence" value="ECO:0000318"/>
    <property type="project" value="GO_Central"/>
</dbReference>
<dbReference type="GO" id="GO:0032259">
    <property type="term" value="P:methylation"/>
    <property type="evidence" value="ECO:0007669"/>
    <property type="project" value="UniProtKB-KW"/>
</dbReference>
<dbReference type="FunFam" id="3.40.50.150:FF:000242">
    <property type="entry name" value="Protein-lysine N-methyltransferase EEF2KMT"/>
    <property type="match status" value="1"/>
</dbReference>
<dbReference type="Gene3D" id="3.40.50.150">
    <property type="entry name" value="Vaccinia Virus protein VP39"/>
    <property type="match status" value="1"/>
</dbReference>
<dbReference type="InterPro" id="IPR029426">
    <property type="entry name" value="FAM86_N"/>
</dbReference>
<dbReference type="InterPro" id="IPR019410">
    <property type="entry name" value="Methyltransf_16"/>
</dbReference>
<dbReference type="InterPro" id="IPR029063">
    <property type="entry name" value="SAM-dependent_MTases_sf"/>
</dbReference>
<dbReference type="PANTHER" id="PTHR14614">
    <property type="entry name" value="HEPATOCELLULAR CARCINOMA-ASSOCIATED ANTIGEN"/>
    <property type="match status" value="1"/>
</dbReference>
<dbReference type="PANTHER" id="PTHR14614:SF117">
    <property type="entry name" value="PROTEIN-LYSINE N-METHYLTRANSFERASE EEF2KMT-RELATED"/>
    <property type="match status" value="1"/>
</dbReference>
<dbReference type="Pfam" id="PF14904">
    <property type="entry name" value="FAM86"/>
    <property type="match status" value="1"/>
</dbReference>
<dbReference type="Pfam" id="PF10294">
    <property type="entry name" value="Methyltransf_16"/>
    <property type="match status" value="1"/>
</dbReference>
<dbReference type="SUPFAM" id="SSF53335">
    <property type="entry name" value="S-adenosyl-L-methionine-dependent methyltransferases"/>
    <property type="match status" value="1"/>
</dbReference>
<feature type="chain" id="PRO_0000307639" description="Putative protein N-methyltransferase FAM86B2">
    <location>
        <begin position="1"/>
        <end position="330"/>
    </location>
</feature>
<feature type="binding site" evidence="3">
    <location>
        <position position="139"/>
    </location>
    <ligand>
        <name>S-adenosyl-L-methionine</name>
        <dbReference type="ChEBI" id="CHEBI:59789"/>
    </ligand>
</feature>
<feature type="binding site" evidence="3">
    <location>
        <begin position="165"/>
        <end position="167"/>
    </location>
    <ligand>
        <name>S-adenosyl-L-methionine</name>
        <dbReference type="ChEBI" id="CHEBI:59789"/>
    </ligand>
</feature>
<feature type="binding site" evidence="3">
    <location>
        <position position="228"/>
    </location>
    <ligand>
        <name>S-adenosyl-L-methionine</name>
        <dbReference type="ChEBI" id="CHEBI:59789"/>
    </ligand>
</feature>
<feature type="binding site" evidence="3">
    <location>
        <position position="247"/>
    </location>
    <ligand>
        <name>S-adenosyl-L-methionine</name>
        <dbReference type="ChEBI" id="CHEBI:59789"/>
    </ligand>
</feature>
<feature type="modified residue" description="N-acetylmethionine" evidence="2">
    <location>
        <position position="1"/>
    </location>
</feature>
<feature type="sequence variant" id="VAR_036617" description="In dbSNP:rs2684093.">
    <original>D</original>
    <variation>Y</variation>
    <location>
        <position position="43"/>
    </location>
</feature>
<feature type="sequence variant" id="VAR_036618" description="In dbSNP:rs7817085.">
    <original>R</original>
    <variation>S</variation>
    <location>
        <position position="285"/>
    </location>
</feature>